<organism>
    <name type="scientific">Parvibaculum lavamentivorans (strain DS-1 / DSM 13023 / NCIMB 13966)</name>
    <dbReference type="NCBI Taxonomy" id="402881"/>
    <lineage>
        <taxon>Bacteria</taxon>
        <taxon>Pseudomonadati</taxon>
        <taxon>Pseudomonadota</taxon>
        <taxon>Alphaproteobacteria</taxon>
        <taxon>Hyphomicrobiales</taxon>
        <taxon>Parvibaculaceae</taxon>
        <taxon>Parvibaculum</taxon>
    </lineage>
</organism>
<protein>
    <recommendedName>
        <fullName evidence="1">Cysteine--tRNA ligase</fullName>
        <ecNumber evidence="1">6.1.1.16</ecNumber>
    </recommendedName>
    <alternativeName>
        <fullName evidence="1">Cysteinyl-tRNA synthetase</fullName>
        <shortName evidence="1">CysRS</shortName>
    </alternativeName>
</protein>
<keyword id="KW-0030">Aminoacyl-tRNA synthetase</keyword>
<keyword id="KW-0067">ATP-binding</keyword>
<keyword id="KW-0963">Cytoplasm</keyword>
<keyword id="KW-0436">Ligase</keyword>
<keyword id="KW-0479">Metal-binding</keyword>
<keyword id="KW-0547">Nucleotide-binding</keyword>
<keyword id="KW-0648">Protein biosynthesis</keyword>
<keyword id="KW-1185">Reference proteome</keyword>
<keyword id="KW-0862">Zinc</keyword>
<evidence type="ECO:0000255" key="1">
    <source>
        <dbReference type="HAMAP-Rule" id="MF_00041"/>
    </source>
</evidence>
<sequence>MNTQPNKLKLSLYNTLTRQKEIFEPAEPDRVTMYVCGPTVYNRSHIGNARPAVVFDVLARLLRRLYRHVVYARNITDIEDKIIAAAKEAGVDISVITEKYARIYREDMGALGVLAPDIEPKATESIAEMISMMERLIASGNAYAAEGHVLFNVPSFAEYGRLSGRDRDDMIAGARVEVAPYKKDPADFVLWKPSTPEQPGWDSPWGRGRPGWHIECSAMIEKHLGETIDIHGGGIDLQFPHHENELAQSSCAHGHTPLARFWLHNGFVNMGSEKMSKSLGNVLLVHELLAQAPGEAVRLALLNAHYRQPLDWSDEGLAQAKRMLDRLYGALRALSDVKAEPTNDAAPDAFMEALADDLNTPKALAVLFDLAKRANTETDPGTKAQLKAALIGAGRLLGVLEMDPEAWFAGAGAASHIDGEEVERLIAARNAARKAKDFAEADRIRGALAEMGVAIEDGPQGTSWRVAS</sequence>
<gene>
    <name evidence="1" type="primary">cysS</name>
    <name type="ordered locus">Plav_2665</name>
</gene>
<reference key="1">
    <citation type="journal article" date="2011" name="Stand. Genomic Sci.">
        <title>Complete genome sequence of Parvibaculum lavamentivorans type strain (DS-1(T)).</title>
        <authorList>
            <person name="Schleheck D."/>
            <person name="Weiss M."/>
            <person name="Pitluck S."/>
            <person name="Bruce D."/>
            <person name="Land M.L."/>
            <person name="Han S."/>
            <person name="Saunders E."/>
            <person name="Tapia R."/>
            <person name="Detter C."/>
            <person name="Brettin T."/>
            <person name="Han J."/>
            <person name="Woyke T."/>
            <person name="Goodwin L."/>
            <person name="Pennacchio L."/>
            <person name="Nolan M."/>
            <person name="Cook A.M."/>
            <person name="Kjelleberg S."/>
            <person name="Thomas T."/>
        </authorList>
    </citation>
    <scope>NUCLEOTIDE SEQUENCE [LARGE SCALE GENOMIC DNA]</scope>
    <source>
        <strain>DS-1 / DSM 13023 / NCIMB 13966</strain>
    </source>
</reference>
<dbReference type="EC" id="6.1.1.16" evidence="1"/>
<dbReference type="EMBL" id="CP000774">
    <property type="protein sequence ID" value="ABS64273.1"/>
    <property type="molecule type" value="Genomic_DNA"/>
</dbReference>
<dbReference type="RefSeq" id="WP_012111585.1">
    <property type="nucleotide sequence ID" value="NC_009719.1"/>
</dbReference>
<dbReference type="SMR" id="A7HWJ0"/>
<dbReference type="STRING" id="402881.Plav_2665"/>
<dbReference type="KEGG" id="pla:Plav_2665"/>
<dbReference type="eggNOG" id="COG0215">
    <property type="taxonomic scope" value="Bacteria"/>
</dbReference>
<dbReference type="HOGENOM" id="CLU_013528_0_1_5"/>
<dbReference type="OrthoDB" id="9815130at2"/>
<dbReference type="Proteomes" id="UP000006377">
    <property type="component" value="Chromosome"/>
</dbReference>
<dbReference type="GO" id="GO:0005829">
    <property type="term" value="C:cytosol"/>
    <property type="evidence" value="ECO:0007669"/>
    <property type="project" value="TreeGrafter"/>
</dbReference>
<dbReference type="GO" id="GO:0005524">
    <property type="term" value="F:ATP binding"/>
    <property type="evidence" value="ECO:0007669"/>
    <property type="project" value="UniProtKB-UniRule"/>
</dbReference>
<dbReference type="GO" id="GO:0004817">
    <property type="term" value="F:cysteine-tRNA ligase activity"/>
    <property type="evidence" value="ECO:0007669"/>
    <property type="project" value="UniProtKB-UniRule"/>
</dbReference>
<dbReference type="GO" id="GO:0008270">
    <property type="term" value="F:zinc ion binding"/>
    <property type="evidence" value="ECO:0007669"/>
    <property type="project" value="UniProtKB-UniRule"/>
</dbReference>
<dbReference type="GO" id="GO:0006423">
    <property type="term" value="P:cysteinyl-tRNA aminoacylation"/>
    <property type="evidence" value="ECO:0007669"/>
    <property type="project" value="UniProtKB-UniRule"/>
</dbReference>
<dbReference type="CDD" id="cd07963">
    <property type="entry name" value="Anticodon_Ia_Cys"/>
    <property type="match status" value="1"/>
</dbReference>
<dbReference type="CDD" id="cd00672">
    <property type="entry name" value="CysRS_core"/>
    <property type="match status" value="1"/>
</dbReference>
<dbReference type="FunFam" id="3.40.50.620:FF:000068">
    <property type="entry name" value="Cysteine--tRNA ligase"/>
    <property type="match status" value="1"/>
</dbReference>
<dbReference type="Gene3D" id="1.20.120.1910">
    <property type="entry name" value="Cysteine-tRNA ligase, C-terminal anti-codon recognition domain"/>
    <property type="match status" value="1"/>
</dbReference>
<dbReference type="Gene3D" id="3.40.50.620">
    <property type="entry name" value="HUPs"/>
    <property type="match status" value="1"/>
</dbReference>
<dbReference type="HAMAP" id="MF_00041">
    <property type="entry name" value="Cys_tRNA_synth"/>
    <property type="match status" value="1"/>
</dbReference>
<dbReference type="InterPro" id="IPR015803">
    <property type="entry name" value="Cys-tRNA-ligase"/>
</dbReference>
<dbReference type="InterPro" id="IPR015273">
    <property type="entry name" value="Cys-tRNA-synt_Ia_DALR"/>
</dbReference>
<dbReference type="InterPro" id="IPR024909">
    <property type="entry name" value="Cys-tRNA/MSH_ligase"/>
</dbReference>
<dbReference type="InterPro" id="IPR056411">
    <property type="entry name" value="CysS_C"/>
</dbReference>
<dbReference type="InterPro" id="IPR014729">
    <property type="entry name" value="Rossmann-like_a/b/a_fold"/>
</dbReference>
<dbReference type="InterPro" id="IPR032678">
    <property type="entry name" value="tRNA-synt_1_cat_dom"/>
</dbReference>
<dbReference type="InterPro" id="IPR009080">
    <property type="entry name" value="tRNAsynth_Ia_anticodon-bd"/>
</dbReference>
<dbReference type="NCBIfam" id="TIGR00435">
    <property type="entry name" value="cysS"/>
    <property type="match status" value="1"/>
</dbReference>
<dbReference type="PANTHER" id="PTHR10890:SF3">
    <property type="entry name" value="CYSTEINE--TRNA LIGASE, CYTOPLASMIC"/>
    <property type="match status" value="1"/>
</dbReference>
<dbReference type="PANTHER" id="PTHR10890">
    <property type="entry name" value="CYSTEINYL-TRNA SYNTHETASE"/>
    <property type="match status" value="1"/>
</dbReference>
<dbReference type="Pfam" id="PF23493">
    <property type="entry name" value="CysS_C"/>
    <property type="match status" value="1"/>
</dbReference>
<dbReference type="Pfam" id="PF09190">
    <property type="entry name" value="DALR_2"/>
    <property type="match status" value="1"/>
</dbReference>
<dbReference type="Pfam" id="PF01406">
    <property type="entry name" value="tRNA-synt_1e"/>
    <property type="match status" value="1"/>
</dbReference>
<dbReference type="PRINTS" id="PR00983">
    <property type="entry name" value="TRNASYNTHCYS"/>
</dbReference>
<dbReference type="SMART" id="SM00840">
    <property type="entry name" value="DALR_2"/>
    <property type="match status" value="1"/>
</dbReference>
<dbReference type="SUPFAM" id="SSF47323">
    <property type="entry name" value="Anticodon-binding domain of a subclass of class I aminoacyl-tRNA synthetases"/>
    <property type="match status" value="1"/>
</dbReference>
<dbReference type="SUPFAM" id="SSF52374">
    <property type="entry name" value="Nucleotidylyl transferase"/>
    <property type="match status" value="1"/>
</dbReference>
<proteinExistence type="inferred from homology"/>
<name>SYC_PARL1</name>
<comment type="catalytic activity">
    <reaction evidence="1">
        <text>tRNA(Cys) + L-cysteine + ATP = L-cysteinyl-tRNA(Cys) + AMP + diphosphate</text>
        <dbReference type="Rhea" id="RHEA:17773"/>
        <dbReference type="Rhea" id="RHEA-COMP:9661"/>
        <dbReference type="Rhea" id="RHEA-COMP:9679"/>
        <dbReference type="ChEBI" id="CHEBI:30616"/>
        <dbReference type="ChEBI" id="CHEBI:33019"/>
        <dbReference type="ChEBI" id="CHEBI:35235"/>
        <dbReference type="ChEBI" id="CHEBI:78442"/>
        <dbReference type="ChEBI" id="CHEBI:78517"/>
        <dbReference type="ChEBI" id="CHEBI:456215"/>
        <dbReference type="EC" id="6.1.1.16"/>
    </reaction>
</comment>
<comment type="cofactor">
    <cofactor evidence="1">
        <name>Zn(2+)</name>
        <dbReference type="ChEBI" id="CHEBI:29105"/>
    </cofactor>
    <text evidence="1">Binds 1 zinc ion per subunit.</text>
</comment>
<comment type="subunit">
    <text evidence="1">Monomer.</text>
</comment>
<comment type="subcellular location">
    <subcellularLocation>
        <location evidence="1">Cytoplasm</location>
    </subcellularLocation>
</comment>
<comment type="similarity">
    <text evidence="1">Belongs to the class-I aminoacyl-tRNA synthetase family.</text>
</comment>
<accession>A7HWJ0</accession>
<feature type="chain" id="PRO_0000332865" description="Cysteine--tRNA ligase">
    <location>
        <begin position="1"/>
        <end position="468"/>
    </location>
</feature>
<feature type="short sequence motif" description="'HIGH' region">
    <location>
        <begin position="38"/>
        <end position="48"/>
    </location>
</feature>
<feature type="short sequence motif" description="'KMSKS' region">
    <location>
        <begin position="274"/>
        <end position="278"/>
    </location>
</feature>
<feature type="binding site" evidence="1">
    <location>
        <position position="36"/>
    </location>
    <ligand>
        <name>Zn(2+)</name>
        <dbReference type="ChEBI" id="CHEBI:29105"/>
    </ligand>
</feature>
<feature type="binding site" evidence="1">
    <location>
        <position position="216"/>
    </location>
    <ligand>
        <name>Zn(2+)</name>
        <dbReference type="ChEBI" id="CHEBI:29105"/>
    </ligand>
</feature>
<feature type="binding site" evidence="1">
    <location>
        <position position="241"/>
    </location>
    <ligand>
        <name>Zn(2+)</name>
        <dbReference type="ChEBI" id="CHEBI:29105"/>
    </ligand>
</feature>
<feature type="binding site" evidence="1">
    <location>
        <position position="245"/>
    </location>
    <ligand>
        <name>Zn(2+)</name>
        <dbReference type="ChEBI" id="CHEBI:29105"/>
    </ligand>
</feature>
<feature type="binding site" evidence="1">
    <location>
        <position position="277"/>
    </location>
    <ligand>
        <name>ATP</name>
        <dbReference type="ChEBI" id="CHEBI:30616"/>
    </ligand>
</feature>